<comment type="function">
    <text evidence="1">Cleaved by the protease thrombin to yield monomers which, together with fibrinogen beta (FGB) and fibrinogen gamma (FGG), polymerize to form an insoluble fibrin matrix. Fibrin has a major function in hemostasis as one of the primary components of blood clots. In addition, functions during the early stages of wound repair to stabilize the lesion and guide cell migration during re-epithelialization. Was originally thought to be essential for platelet aggregation, based on in vitro studies using anticoagulated blood. However subsequent studies have shown that it is not absolutely required for thrombus formation in vivo. Enhances expression of SELP in activated platelets via an ITGB3-dependent pathway. Maternal fibrinogen is essential for successful pregnancy. Fibrin deposition is also associated with infection, where it protects against IFNG-mediated hemorrhage. May also facilitate the immune response via both innate and T-cell mediated pathways.</text>
</comment>
<comment type="subunit">
    <text evidence="2">Heterohexamer; disulfide linked. Contains 2 sets of 3 non-identical chains (alpha, beta and gamma). The 2 heterotrimers are in head to head conformation with the N-termini in a small central domain (By similarity).</text>
</comment>
<comment type="subcellular location">
    <subcellularLocation>
        <location>Secreted</location>
    </subcellularLocation>
</comment>
<comment type="domain">
    <text evidence="2">A long coiled coil structure formed by 3 polypeptide chains connects the central nodule to the C-terminal domains (distal nodules). The long C-terminal ends of the alpha chains fold back, contributing a fourth strand to the coiled coil structure.</text>
</comment>
<comment type="PTM">
    <text>Conversion of fibrinogen to fibrin is triggered by thrombin, which cleaves fibrinopeptides A and B from alpha and beta chains, and thus exposes the N-terminal polymerization sites responsible for the formation of the soft clot. The soft clot is converted into the hard clot by factor XIIIA which catalyzes the epsilon-(gamma-glutamyl)lysine cross-linking between gamma chains (stronger) and between alpha chains (weaker) of different monomers.</text>
</comment>
<comment type="PTM">
    <text>Forms F13A-mediated cross-links between a glutamine and the epsilon-amino group of a lysine residue, forming fibronectin-fibrinogen heteropolymers.</text>
</comment>
<gene>
    <name evidence="2" type="primary">FGA</name>
</gene>
<protein>
    <recommendedName>
        <fullName>Fibrinogen alpha chain</fullName>
    </recommendedName>
    <component>
        <recommendedName>
            <fullName>Fibrinopeptide A</fullName>
        </recommendedName>
    </component>
</protein>
<reference evidence="3 4" key="1">
    <citation type="book" date="1968" name="Chemotaxonomy and serotaxonomy">
        <editorList>
            <person name="Hawkes J.G."/>
        </editorList>
        <authorList>
            <person name="Blombaeck B."/>
            <person name="Blombaeck M."/>
        </authorList>
    </citation>
    <scope>PROTEIN SEQUENCE</scope>
</reference>
<dbReference type="PIR" id="G29501">
    <property type="entry name" value="G29501"/>
</dbReference>
<dbReference type="GO" id="GO:0005576">
    <property type="term" value="C:extracellular region"/>
    <property type="evidence" value="ECO:0007669"/>
    <property type="project" value="UniProtKB-SubCell"/>
</dbReference>
<dbReference type="GO" id="GO:0002250">
    <property type="term" value="P:adaptive immune response"/>
    <property type="evidence" value="ECO:0007669"/>
    <property type="project" value="UniProtKB-KW"/>
</dbReference>
<dbReference type="GO" id="GO:0007596">
    <property type="term" value="P:blood coagulation"/>
    <property type="evidence" value="ECO:0007669"/>
    <property type="project" value="UniProtKB-KW"/>
</dbReference>
<dbReference type="GO" id="GO:0045087">
    <property type="term" value="P:innate immune response"/>
    <property type="evidence" value="ECO:0007669"/>
    <property type="project" value="UniProtKB-KW"/>
</dbReference>
<organism>
    <name type="scientific">Ursus arctos</name>
    <name type="common">Brown bear</name>
    <name type="synonym">Grizzly bear</name>
    <dbReference type="NCBI Taxonomy" id="9644"/>
    <lineage>
        <taxon>Eukaryota</taxon>
        <taxon>Metazoa</taxon>
        <taxon>Chordata</taxon>
        <taxon>Craniata</taxon>
        <taxon>Vertebrata</taxon>
        <taxon>Euteleostomi</taxon>
        <taxon>Mammalia</taxon>
        <taxon>Eutheria</taxon>
        <taxon>Laurasiatheria</taxon>
        <taxon>Carnivora</taxon>
        <taxon>Caniformia</taxon>
        <taxon>Ursidae</taxon>
        <taxon>Ursus</taxon>
    </lineage>
</organism>
<accession>Q7M3I7</accession>
<sequence>TDGKEGEFIAEGGGVR</sequence>
<keyword id="KW-1064">Adaptive immunity</keyword>
<keyword id="KW-0094">Blood coagulation</keyword>
<keyword id="KW-0175">Coiled coil</keyword>
<keyword id="KW-0903">Direct protein sequencing</keyword>
<keyword id="KW-1015">Disulfide bond</keyword>
<keyword id="KW-0356">Hemostasis</keyword>
<keyword id="KW-0391">Immunity</keyword>
<keyword id="KW-0399">Innate immunity</keyword>
<keyword id="KW-0964">Secreted</keyword>
<name>FIBA_URSAR</name>
<proteinExistence type="evidence at protein level"/>
<evidence type="ECO:0000250" key="1">
    <source>
        <dbReference type="UniProtKB" id="E9PV24"/>
    </source>
</evidence>
<evidence type="ECO:0000250" key="2">
    <source>
        <dbReference type="UniProtKB" id="P02671"/>
    </source>
</evidence>
<evidence type="ECO:0000305" key="3"/>
<evidence type="ECO:0000312" key="4">
    <source>
        <dbReference type="PIR" id="G29501"/>
    </source>
</evidence>
<feature type="peptide" id="PRO_0000252048" description="Fibrinopeptide A">
    <location>
        <begin position="1"/>
        <end position="16"/>
    </location>
</feature>
<feature type="non-terminal residue" evidence="3">
    <location>
        <position position="16"/>
    </location>
</feature>